<reference key="1">
    <citation type="journal article" date="2002" name="Lancet">
        <title>Genome and virulence determinants of high virulence community-acquired MRSA.</title>
        <authorList>
            <person name="Baba T."/>
            <person name="Takeuchi F."/>
            <person name="Kuroda M."/>
            <person name="Yuzawa H."/>
            <person name="Aoki K."/>
            <person name="Oguchi A."/>
            <person name="Nagai Y."/>
            <person name="Iwama N."/>
            <person name="Asano K."/>
            <person name="Naimi T."/>
            <person name="Kuroda H."/>
            <person name="Cui L."/>
            <person name="Yamamoto K."/>
            <person name="Hiramatsu K."/>
        </authorList>
    </citation>
    <scope>NUCLEOTIDE SEQUENCE [LARGE SCALE GENOMIC DNA]</scope>
    <source>
        <strain>MW2</strain>
    </source>
</reference>
<name>AZOR_STAAW</name>
<keyword id="KW-0285">Flavoprotein</keyword>
<keyword id="KW-0288">FMN</keyword>
<keyword id="KW-0520">NAD</keyword>
<keyword id="KW-0560">Oxidoreductase</keyword>
<sequence length="208" mass="23365">MAKVLYITAHPFNELVSNSMAAGKAFIETYQQQHPDDEVKHIDLFETYIPVIDKDVLTGWGKMSNGETLTDDEQMKVSRLSDILEEFLSADKYVFVTPMWNLSFPPVVKAYIDAISIAGKTFKYSAEGPQGLLTDKKVLHIQSRGGYYTEGPAADFEMGDRYLRTIMTFLGVPSYETIIIEGHNAEPHKTEEIKATSINNAEKLATIF</sequence>
<feature type="chain" id="PRO_0000166358" description="FMN-dependent NADH:quinone oxidoreductase">
    <location>
        <begin position="1"/>
        <end position="208"/>
    </location>
</feature>
<feature type="binding site" evidence="1">
    <location>
        <begin position="17"/>
        <end position="19"/>
    </location>
    <ligand>
        <name>FMN</name>
        <dbReference type="ChEBI" id="CHEBI:58210"/>
    </ligand>
</feature>
<feature type="binding site" evidence="1">
    <location>
        <begin position="99"/>
        <end position="102"/>
    </location>
    <ligand>
        <name>FMN</name>
        <dbReference type="ChEBI" id="CHEBI:58210"/>
    </ligand>
</feature>
<feature type="binding site" evidence="1">
    <location>
        <begin position="143"/>
        <end position="146"/>
    </location>
    <ligand>
        <name>FMN</name>
        <dbReference type="ChEBI" id="CHEBI:58210"/>
    </ligand>
</feature>
<gene>
    <name evidence="1" type="primary">azoR</name>
    <name type="ordered locus">MW0187</name>
</gene>
<organism>
    <name type="scientific">Staphylococcus aureus (strain MW2)</name>
    <dbReference type="NCBI Taxonomy" id="196620"/>
    <lineage>
        <taxon>Bacteria</taxon>
        <taxon>Bacillati</taxon>
        <taxon>Bacillota</taxon>
        <taxon>Bacilli</taxon>
        <taxon>Bacillales</taxon>
        <taxon>Staphylococcaceae</taxon>
        <taxon>Staphylococcus</taxon>
    </lineage>
</organism>
<accession>Q8NYK7</accession>
<evidence type="ECO:0000255" key="1">
    <source>
        <dbReference type="HAMAP-Rule" id="MF_01216"/>
    </source>
</evidence>
<protein>
    <recommendedName>
        <fullName evidence="1">FMN-dependent NADH:quinone oxidoreductase</fullName>
        <ecNumber evidence="1">1.6.5.-</ecNumber>
    </recommendedName>
    <alternativeName>
        <fullName evidence="1">Azo-dye reductase</fullName>
    </alternativeName>
    <alternativeName>
        <fullName evidence="1">FMN-dependent NADH-azo compound oxidoreductase</fullName>
    </alternativeName>
    <alternativeName>
        <fullName evidence="1">FMN-dependent NADH-azoreductase</fullName>
        <ecNumber evidence="1">1.7.1.17</ecNumber>
    </alternativeName>
</protein>
<proteinExistence type="inferred from homology"/>
<dbReference type="EC" id="1.6.5.-" evidence="1"/>
<dbReference type="EC" id="1.7.1.17" evidence="1"/>
<dbReference type="EMBL" id="BA000033">
    <property type="protein sequence ID" value="BAB94052.1"/>
    <property type="molecule type" value="Genomic_DNA"/>
</dbReference>
<dbReference type="RefSeq" id="WP_001151450.1">
    <property type="nucleotide sequence ID" value="NC_003923.1"/>
</dbReference>
<dbReference type="SMR" id="Q8NYK7"/>
<dbReference type="KEGG" id="sam:MW0187"/>
<dbReference type="HOGENOM" id="CLU_088964_3_1_9"/>
<dbReference type="GO" id="GO:0009055">
    <property type="term" value="F:electron transfer activity"/>
    <property type="evidence" value="ECO:0007669"/>
    <property type="project" value="UniProtKB-UniRule"/>
</dbReference>
<dbReference type="GO" id="GO:0010181">
    <property type="term" value="F:FMN binding"/>
    <property type="evidence" value="ECO:0007669"/>
    <property type="project" value="UniProtKB-UniRule"/>
</dbReference>
<dbReference type="GO" id="GO:0016652">
    <property type="term" value="F:oxidoreductase activity, acting on NAD(P)H as acceptor"/>
    <property type="evidence" value="ECO:0007669"/>
    <property type="project" value="UniProtKB-UniRule"/>
</dbReference>
<dbReference type="GO" id="GO:0016655">
    <property type="term" value="F:oxidoreductase activity, acting on NAD(P)H, quinone or similar compound as acceptor"/>
    <property type="evidence" value="ECO:0007669"/>
    <property type="project" value="InterPro"/>
</dbReference>
<dbReference type="Gene3D" id="3.40.50.360">
    <property type="match status" value="1"/>
</dbReference>
<dbReference type="HAMAP" id="MF_01216">
    <property type="entry name" value="Azoreductase_type1"/>
    <property type="match status" value="1"/>
</dbReference>
<dbReference type="InterPro" id="IPR003680">
    <property type="entry name" value="Flavodoxin_fold"/>
</dbReference>
<dbReference type="InterPro" id="IPR029039">
    <property type="entry name" value="Flavoprotein-like_sf"/>
</dbReference>
<dbReference type="InterPro" id="IPR050104">
    <property type="entry name" value="FMN-dep_NADH:Q_OxRdtase_AzoR1"/>
</dbReference>
<dbReference type="InterPro" id="IPR023048">
    <property type="entry name" value="NADH:quinone_OxRdtase_FMN_depd"/>
</dbReference>
<dbReference type="NCBIfam" id="NF010075">
    <property type="entry name" value="PRK13556.1"/>
    <property type="match status" value="1"/>
</dbReference>
<dbReference type="PANTHER" id="PTHR43741">
    <property type="entry name" value="FMN-DEPENDENT NADH-AZOREDUCTASE 1"/>
    <property type="match status" value="1"/>
</dbReference>
<dbReference type="PANTHER" id="PTHR43741:SF7">
    <property type="entry name" value="FMN-DEPENDENT NADH:QUINONE OXIDOREDUCTASE"/>
    <property type="match status" value="1"/>
</dbReference>
<dbReference type="Pfam" id="PF02525">
    <property type="entry name" value="Flavodoxin_2"/>
    <property type="match status" value="1"/>
</dbReference>
<dbReference type="SUPFAM" id="SSF52218">
    <property type="entry name" value="Flavoproteins"/>
    <property type="match status" value="1"/>
</dbReference>
<comment type="function">
    <text evidence="1">Quinone reductase that provides resistance to thiol-specific stress caused by electrophilic quinones.</text>
</comment>
<comment type="function">
    <text evidence="1">Also exhibits azoreductase activity. Catalyzes the reductive cleavage of the azo bond in aromatic azo compounds to the corresponding amines.</text>
</comment>
<comment type="catalytic activity">
    <reaction evidence="1">
        <text>2 a quinone + NADH + H(+) = 2 a 1,4-benzosemiquinone + NAD(+)</text>
        <dbReference type="Rhea" id="RHEA:65952"/>
        <dbReference type="ChEBI" id="CHEBI:15378"/>
        <dbReference type="ChEBI" id="CHEBI:57540"/>
        <dbReference type="ChEBI" id="CHEBI:57945"/>
        <dbReference type="ChEBI" id="CHEBI:132124"/>
        <dbReference type="ChEBI" id="CHEBI:134225"/>
    </reaction>
</comment>
<comment type="catalytic activity">
    <reaction evidence="1">
        <text>N,N-dimethyl-1,4-phenylenediamine + anthranilate + 2 NAD(+) = 2-(4-dimethylaminophenyl)diazenylbenzoate + 2 NADH + 2 H(+)</text>
        <dbReference type="Rhea" id="RHEA:55872"/>
        <dbReference type="ChEBI" id="CHEBI:15378"/>
        <dbReference type="ChEBI" id="CHEBI:15783"/>
        <dbReference type="ChEBI" id="CHEBI:16567"/>
        <dbReference type="ChEBI" id="CHEBI:57540"/>
        <dbReference type="ChEBI" id="CHEBI:57945"/>
        <dbReference type="ChEBI" id="CHEBI:71579"/>
        <dbReference type="EC" id="1.7.1.17"/>
    </reaction>
</comment>
<comment type="cofactor">
    <cofactor evidence="1">
        <name>FMN</name>
        <dbReference type="ChEBI" id="CHEBI:58210"/>
    </cofactor>
    <text evidence="1">Binds 1 FMN per subunit.</text>
</comment>
<comment type="subunit">
    <text evidence="1">Homodimer.</text>
</comment>
<comment type="similarity">
    <text evidence="1">Belongs to the azoreductase type 1 family.</text>
</comment>